<name>PYRR_ROSS1</name>
<gene>
    <name evidence="1" type="primary">pyrR</name>
    <name type="ordered locus">RoseRS_2864</name>
</gene>
<reference key="1">
    <citation type="submission" date="2007-04" db="EMBL/GenBank/DDBJ databases">
        <title>Complete sequence of Roseiflexus sp. RS-1.</title>
        <authorList>
            <consortium name="US DOE Joint Genome Institute"/>
            <person name="Copeland A."/>
            <person name="Lucas S."/>
            <person name="Lapidus A."/>
            <person name="Barry K."/>
            <person name="Detter J.C."/>
            <person name="Glavina del Rio T."/>
            <person name="Hammon N."/>
            <person name="Israni S."/>
            <person name="Dalin E."/>
            <person name="Tice H."/>
            <person name="Pitluck S."/>
            <person name="Chertkov O."/>
            <person name="Brettin T."/>
            <person name="Bruce D."/>
            <person name="Han C."/>
            <person name="Schmutz J."/>
            <person name="Larimer F."/>
            <person name="Land M."/>
            <person name="Hauser L."/>
            <person name="Kyrpides N."/>
            <person name="Mikhailova N."/>
            <person name="Bryant D.A."/>
            <person name="Richardson P."/>
        </authorList>
    </citation>
    <scope>NUCLEOTIDE SEQUENCE [LARGE SCALE GENOMIC DNA]</scope>
    <source>
        <strain>RS-1</strain>
    </source>
</reference>
<dbReference type="EC" id="2.4.2.9" evidence="1"/>
<dbReference type="EMBL" id="CP000686">
    <property type="protein sequence ID" value="ABQ91232.1"/>
    <property type="molecule type" value="Genomic_DNA"/>
</dbReference>
<dbReference type="RefSeq" id="WP_011957576.1">
    <property type="nucleotide sequence ID" value="NC_009523.1"/>
</dbReference>
<dbReference type="SMR" id="A5UX79"/>
<dbReference type="STRING" id="357808.RoseRS_2864"/>
<dbReference type="KEGG" id="rrs:RoseRS_2864"/>
<dbReference type="eggNOG" id="COG2065">
    <property type="taxonomic scope" value="Bacteria"/>
</dbReference>
<dbReference type="HOGENOM" id="CLU_094234_2_1_0"/>
<dbReference type="OrthoDB" id="9802227at2"/>
<dbReference type="Proteomes" id="UP000006554">
    <property type="component" value="Chromosome"/>
</dbReference>
<dbReference type="GO" id="GO:0004845">
    <property type="term" value="F:uracil phosphoribosyltransferase activity"/>
    <property type="evidence" value="ECO:0007669"/>
    <property type="project" value="UniProtKB-UniRule"/>
</dbReference>
<dbReference type="GO" id="GO:0006355">
    <property type="term" value="P:regulation of DNA-templated transcription"/>
    <property type="evidence" value="ECO:0007669"/>
    <property type="project" value="UniProtKB-UniRule"/>
</dbReference>
<dbReference type="CDD" id="cd06223">
    <property type="entry name" value="PRTases_typeI"/>
    <property type="match status" value="1"/>
</dbReference>
<dbReference type="FunFam" id="3.40.50.2020:FF:000020">
    <property type="entry name" value="Bifunctional protein PyrR"/>
    <property type="match status" value="1"/>
</dbReference>
<dbReference type="Gene3D" id="3.40.50.2020">
    <property type="match status" value="1"/>
</dbReference>
<dbReference type="HAMAP" id="MF_01219">
    <property type="entry name" value="PyrR"/>
    <property type="match status" value="1"/>
</dbReference>
<dbReference type="InterPro" id="IPR000836">
    <property type="entry name" value="PRibTrfase_dom"/>
</dbReference>
<dbReference type="InterPro" id="IPR029057">
    <property type="entry name" value="PRTase-like"/>
</dbReference>
<dbReference type="InterPro" id="IPR023050">
    <property type="entry name" value="PyrR"/>
</dbReference>
<dbReference type="InterPro" id="IPR050137">
    <property type="entry name" value="PyrR_bifunctional"/>
</dbReference>
<dbReference type="NCBIfam" id="NF003545">
    <property type="entry name" value="PRK05205.1-1"/>
    <property type="match status" value="1"/>
</dbReference>
<dbReference type="NCBIfam" id="NF003547">
    <property type="entry name" value="PRK05205.1-3"/>
    <property type="match status" value="1"/>
</dbReference>
<dbReference type="NCBIfam" id="NF003548">
    <property type="entry name" value="PRK05205.1-4"/>
    <property type="match status" value="1"/>
</dbReference>
<dbReference type="NCBIfam" id="NF003549">
    <property type="entry name" value="PRK05205.1-5"/>
    <property type="match status" value="1"/>
</dbReference>
<dbReference type="PANTHER" id="PTHR11608">
    <property type="entry name" value="BIFUNCTIONAL PROTEIN PYRR"/>
    <property type="match status" value="1"/>
</dbReference>
<dbReference type="PANTHER" id="PTHR11608:SF0">
    <property type="entry name" value="BIFUNCTIONAL PROTEIN PYRR"/>
    <property type="match status" value="1"/>
</dbReference>
<dbReference type="Pfam" id="PF00156">
    <property type="entry name" value="Pribosyltran"/>
    <property type="match status" value="1"/>
</dbReference>
<dbReference type="SUPFAM" id="SSF53271">
    <property type="entry name" value="PRTase-like"/>
    <property type="match status" value="1"/>
</dbReference>
<evidence type="ECO:0000255" key="1">
    <source>
        <dbReference type="HAMAP-Rule" id="MF_01219"/>
    </source>
</evidence>
<feature type="chain" id="PRO_1000085656" description="Bifunctional protein PyrR">
    <location>
        <begin position="1"/>
        <end position="183"/>
    </location>
</feature>
<feature type="short sequence motif" description="PRPP-binding" evidence="1">
    <location>
        <begin position="98"/>
        <end position="110"/>
    </location>
</feature>
<comment type="function">
    <text evidence="1">Regulates the transcription of the pyrimidine nucleotide (pyr) operon in response to exogenous pyrimidines.</text>
</comment>
<comment type="function">
    <text evidence="1">Also displays a weak uracil phosphoribosyltransferase activity which is not physiologically significant.</text>
</comment>
<comment type="catalytic activity">
    <reaction evidence="1">
        <text>UMP + diphosphate = 5-phospho-alpha-D-ribose 1-diphosphate + uracil</text>
        <dbReference type="Rhea" id="RHEA:13017"/>
        <dbReference type="ChEBI" id="CHEBI:17568"/>
        <dbReference type="ChEBI" id="CHEBI:33019"/>
        <dbReference type="ChEBI" id="CHEBI:57865"/>
        <dbReference type="ChEBI" id="CHEBI:58017"/>
        <dbReference type="EC" id="2.4.2.9"/>
    </reaction>
</comment>
<comment type="similarity">
    <text evidence="1">Belongs to the purine/pyrimidine phosphoribosyltransferase family. PyrR subfamily.</text>
</comment>
<proteinExistence type="inferred from homology"/>
<protein>
    <recommendedName>
        <fullName evidence="1">Bifunctional protein PyrR</fullName>
    </recommendedName>
    <domain>
        <recommendedName>
            <fullName evidence="1">Pyrimidine operon regulatory protein</fullName>
        </recommendedName>
    </domain>
    <domain>
        <recommendedName>
            <fullName evidence="1">Uracil phosphoribosyltransferase</fullName>
            <shortName evidence="1">UPRTase</shortName>
            <ecNumber evidence="1">2.4.2.9</ecNumber>
        </recommendedName>
    </domain>
</protein>
<sequence length="183" mass="19997">MGEKQILDADDIRRAITRIAHEIAERNAGVRDVALVGIRRRGAPLAMRIAAALEEIERVRVPVGVLDITLYRDDLGIRGPAPVVHATDIPFDISGRTVVLVDDVLYTGRTIRAALDALTDFGRPARIQLAVLIDRGHRELPIRADFVGKNVPTSRDERIATRLHEVDGGVDGVFIVRTTATSG</sequence>
<accession>A5UX79</accession>
<keyword id="KW-0328">Glycosyltransferase</keyword>
<keyword id="KW-0804">Transcription</keyword>
<keyword id="KW-0805">Transcription regulation</keyword>
<keyword id="KW-0808">Transferase</keyword>
<organism>
    <name type="scientific">Roseiflexus sp. (strain RS-1)</name>
    <dbReference type="NCBI Taxonomy" id="357808"/>
    <lineage>
        <taxon>Bacteria</taxon>
        <taxon>Bacillati</taxon>
        <taxon>Chloroflexota</taxon>
        <taxon>Chloroflexia</taxon>
        <taxon>Chloroflexales</taxon>
        <taxon>Roseiflexineae</taxon>
        <taxon>Roseiflexaceae</taxon>
        <taxon>Roseiflexus</taxon>
    </lineage>
</organism>